<accession>Q9KS45</accession>
<reference key="1">
    <citation type="journal article" date="2000" name="Nature">
        <title>DNA sequence of both chromosomes of the cholera pathogen Vibrio cholerae.</title>
        <authorList>
            <person name="Heidelberg J.F."/>
            <person name="Eisen J.A."/>
            <person name="Nelson W.C."/>
            <person name="Clayton R.A."/>
            <person name="Gwinn M.L."/>
            <person name="Dodson R.J."/>
            <person name="Haft D.H."/>
            <person name="Hickey E.K."/>
            <person name="Peterson J.D."/>
            <person name="Umayam L.A."/>
            <person name="Gill S.R."/>
            <person name="Nelson K.E."/>
            <person name="Read T.D."/>
            <person name="Tettelin H."/>
            <person name="Richardson D.L."/>
            <person name="Ermolaeva M.D."/>
            <person name="Vamathevan J.J."/>
            <person name="Bass S."/>
            <person name="Qin H."/>
            <person name="Dragoi I."/>
            <person name="Sellers P."/>
            <person name="McDonald L.A."/>
            <person name="Utterback T.R."/>
            <person name="Fleischmann R.D."/>
            <person name="Nierman W.C."/>
            <person name="White O."/>
            <person name="Salzberg S.L."/>
            <person name="Smith H.O."/>
            <person name="Colwell R.R."/>
            <person name="Mekalanos J.J."/>
            <person name="Venter J.C."/>
            <person name="Fraser C.M."/>
        </authorList>
    </citation>
    <scope>NUCLEOTIDE SEQUENCE [LARGE SCALE GENOMIC DNA]</scope>
    <source>
        <strain>ATCC 39315 / El Tor Inaba N16961</strain>
    </source>
</reference>
<reference key="2">
    <citation type="journal article" date="2007" name="Proc. Natl. Acad. Sci. U.S.A.">
        <title>Type VI secretion system translocates a phage tail spike-like protein into target cells where it cross-links actin.</title>
        <authorList>
            <person name="Pukatzki S."/>
            <person name="Ma A.T."/>
            <person name="Revel A.T."/>
            <person name="Sturtevant D."/>
            <person name="Mekalanos J.J."/>
        </authorList>
    </citation>
    <scope>FUNCTION</scope>
    <scope>SUBCELLULAR LOCATION</scope>
</reference>
<reference key="3">
    <citation type="journal article" date="2010" name="Proc. Natl. Acad. Sci. U.S.A.">
        <title>In vivo actin cross-linking induced by Vibrio cholerae type VI secretion system is associated with intestinal inflammation.</title>
        <authorList>
            <person name="Ma A.T."/>
            <person name="Mekalanos J.J."/>
        </authorList>
    </citation>
    <scope>FUNCTION</scope>
</reference>
<reference key="4">
    <citation type="journal article" date="2015" name="Proc. Natl. Acad. Sci. U.S.A.">
        <title>Identification of divergent type VI secretion effectors using a conserved chaperone domain.</title>
        <authorList>
            <person name="Liang X."/>
            <person name="Moore R."/>
            <person name="Wilton M."/>
            <person name="Wong M.J."/>
            <person name="Lam L."/>
            <person name="Dong T.G."/>
        </authorList>
    </citation>
    <scope>FUNCTION</scope>
    <scope>DISRUPTION PHENOTYPE</scope>
    <scope>INTERACTION WITH PROTEIN VC1417</scope>
    <source>
        <strain>V52</strain>
    </source>
</reference>
<reference evidence="10" key="5">
    <citation type="submission" date="2012-08" db="PDB data bank">
        <title>Structure of Native VgrG1-ACD with ADP (no cations).</title>
        <authorList>
            <person name="Nguyen V.S."/>
            <person name="Spinelli S."/>
            <person name="Derrez E."/>
            <person name="Durand E."/>
            <person name="Cambillau C."/>
        </authorList>
    </citation>
    <scope>X-RAY CRYSTALLOGRAPHY (2.36 ANGSTROMS) OF 717-1111 IN COMPLEX WITH ADP</scope>
</reference>
<evidence type="ECO:0000250" key="1">
    <source>
        <dbReference type="UniProtKB" id="A0A0H3AIG7"/>
    </source>
</evidence>
<evidence type="ECO:0000250" key="2">
    <source>
        <dbReference type="UniProtKB" id="Q9KS12"/>
    </source>
</evidence>
<evidence type="ECO:0000255" key="3">
    <source>
        <dbReference type="PROSITE-ProRule" id="PRU01108"/>
    </source>
</evidence>
<evidence type="ECO:0000269" key="4">
    <source>
    </source>
</evidence>
<evidence type="ECO:0000269" key="5">
    <source>
    </source>
</evidence>
<evidence type="ECO:0000269" key="6">
    <source>
    </source>
</evidence>
<evidence type="ECO:0000303" key="7">
    <source>
    </source>
</evidence>
<evidence type="ECO:0000305" key="8"/>
<evidence type="ECO:0000312" key="9">
    <source>
        <dbReference type="EMBL" id="AAF94573.1"/>
    </source>
</evidence>
<evidence type="ECO:0007744" key="10">
    <source>
        <dbReference type="PDB" id="4GQK"/>
    </source>
</evidence>
<evidence type="ECO:0007829" key="11">
    <source>
        <dbReference type="PDB" id="4GQK"/>
    </source>
</evidence>
<sequence length="1163" mass="128829">MATLAYSIEVEGLEDETLVVRGFHGQESLSNSVFLGQACYGFRYEVQLASRVSNLTAEQMVDKRAELKLYRNSQLVQRVHGIVRAFSQGDIGHHHTFYQLTLVPALERLSLRHNSRIFQKQTVPEILSILLQEMGINDYAFALKRDGVQREFCVQYRESDIDFLHRLAAEEGLVYSFVHEAGKHTLYFSDASDSLSKLPEPIPYNALVGGAIDTPYIHGLTYRTQAEVSEVQLKDYSFKKPAYSFLQTVQGTELDYQQTRYQHFDAPGRYKDDVNGAAFSQIRLDYLRRHAHTATGQSNEPLLRAGYKFDLQEHLDPAMNRDWVVVSINHQGEQPQALQEDGGSGATTYSNQFSLIPGHLHWRAEPQPKPQVDGPMIATVVGPEGEEIFCDEHGRVKIHFPWDRYSNGNEQSSCWVRVSQGWAGSQYGFIAIPRIGHEVIVEFLNGDPDQPIITGRTYHATNTPPYTLPEHKTKTVLRTETHQGEGFNELSFEDQAGKEQIYLHAQKDFDGLIENDHTTVIRHDHHLTVENDQFTQIKHNQHLTVEWESREAVTGEQVLSIEGSLHVKTGKVWVNEAGTEIHVKAGQKVVIEAGSEITVKAGGSFVKVDPAGVHLSGALVNLNSGGSAGSGSGFGGAMPALPGGLEPAVALAPPQTISYQALLQAEQANVPAVKVCPLAAQEATPAVNSITPPPPPPIAPPMAPPQPIMNPQPTANAQPNLGRSTKATPDFPTHFPKSSIGIENELAGLVVAMPANSAQKFGYVKSAQGDALFMLTKDMNQGSYQRPPSLQDGKNYQNWQTHTVELVSYPCEMDDKAAVETRKQAMLWLATHFTTHIDQSNHQPLAPIQSEDGRFVIEITNAKHVIAAGNGISAESQGQTITMTPSGQQATVGVAAKGFGTSATPELRLLESAPWYQKSLKSQFASLTSAENLDDKELAANVFAYLTSIYLKTAELAKKFGIYINEWDPMSEQITPNANGLTDPKVKNAWEILPRTKPSKIVEILSKSDAKAVMKHIKPQLQSRYSESLSKNVFQYFQDGGEVAGHGINNATVGDKHSPELAILFEFRTVPNELQSYLPKTESTTKSEVKLLDQFDPMKRKTVIQQVESLVQNSGDAFDKWYQSYRDSMNQPPVKNAKKIASANQKAQWVKEHNPQEWQRIIA</sequence>
<comment type="function">
    <text evidence="2 4 5 6">Part of the type VI secretion system (T6SS) specialized secretion system, which delivers several virulence factors in both prokaryotic and eukaryotic cells during infection (PubMed:26150500). Forms the spike at the tip of the elongating tube probably formed by hemolysin co-regulated protein/Hcp. Allows the delivery of the TseL antibacterial toxin to target cells where it exerts its toxicity (PubMed:26150500). Also acts directly as an actin-directed toxin that catalyzes the covalent cross-linking of host cytoplasmic monomeric actin. Mediates the cross-link between 'Lys-50' of one monomer and 'Glu-270' of another actin monomer, resulting in formation of highly toxic actin oligomers that cause cell rounding (PubMed:17873062, PubMed:20150509). The toxin can be highly efficient at very low concentrations by acting on formin homology family proteins: toxic actin oligomers bind with high affinity to formins and adversely affect both nucleation and elongation abilities of formins, causing their potent inhibition in both profilin-dependent and independent manners (By similarity). Acts as an acid--amino-acid ligase that transfers the gamma-phosphoryl group of ATP to the 'Glu-270' actin residue, resulting in the formation of an activated acyl phosphate intermediate. This intermediate is further hydrolyzed and the energy of hydrolysis is utilized for the formation of the amide bond between actin subunits (By similarity).</text>
</comment>
<comment type="cofactor">
    <cofactor evidence="1">
        <name>Mg(2+)</name>
        <dbReference type="ChEBI" id="CHEBI:18420"/>
    </cofactor>
    <text evidence="1">Binds 2 Mg(2+) ions per subunit. Can also use Mn(2+) ions instead of Mg(2+).</text>
</comment>
<comment type="subunit">
    <text evidence="6">Interacts with protein VC1417.</text>
</comment>
<comment type="subcellular location">
    <subcellularLocation>
        <location evidence="4">Secreted</location>
    </subcellularLocation>
    <subcellularLocation>
        <location evidence="4">Host cytoplasm</location>
        <location evidence="4">Host cytosol</location>
    </subcellularLocation>
    <text evidence="4">Secreted via the type VI secretion system.</text>
</comment>
<comment type="disruption phenotype">
    <text evidence="5 6">Deletion leads to a loss of TseL secretion and in turn loss of its ability to mediate prey cell killing.</text>
</comment>
<comment type="similarity">
    <text evidence="8">Belongs to the VgrG protein family.</text>
</comment>
<protein>
    <recommendedName>
        <fullName>Actin cross-linking toxin VgrG1</fullName>
        <ecNumber evidence="1">6.3.2.-</ecNumber>
    </recommendedName>
</protein>
<proteinExistence type="evidence at protein level"/>
<feature type="chain" id="PRO_0000434120" description="Actin cross-linking toxin VgrG1">
    <location>
        <begin position="1"/>
        <end position="1163"/>
    </location>
</feature>
<feature type="domain" description="ACD" evidence="3">
    <location>
        <begin position="728"/>
        <end position="1163"/>
    </location>
</feature>
<feature type="binding site" evidence="10">
    <location>
        <begin position="739"/>
        <end position="743"/>
    </location>
    <ligand>
        <name>ATP</name>
        <dbReference type="ChEBI" id="CHEBI:30616"/>
    </ligand>
</feature>
<feature type="binding site" evidence="1">
    <location>
        <position position="743"/>
    </location>
    <ligand>
        <name>Mg(2+)</name>
        <dbReference type="ChEBI" id="CHEBI:18420"/>
        <label>1</label>
        <note>catalytic; for actin cross-linking activity</note>
    </ligand>
</feature>
<feature type="binding site" evidence="1">
    <location>
        <position position="743"/>
    </location>
    <ligand>
        <name>Mg(2+)</name>
        <dbReference type="ChEBI" id="CHEBI:18420"/>
        <label>2</label>
        <note>catalytic; for actin cross-linking activity</note>
    </ligand>
</feature>
<feature type="binding site" evidence="1">
    <location>
        <position position="805"/>
    </location>
    <ligand>
        <name>Mg(2+)</name>
        <dbReference type="ChEBI" id="CHEBI:18420"/>
        <label>2</label>
        <note>catalytic; for actin cross-linking activity</note>
    </ligand>
</feature>
<feature type="binding site" evidence="10">
    <location>
        <position position="808"/>
    </location>
    <ligand>
        <name>ATP</name>
        <dbReference type="ChEBI" id="CHEBI:30616"/>
    </ligand>
</feature>
<feature type="binding site" evidence="1">
    <location>
        <position position="889"/>
    </location>
    <ligand>
        <name>Mg(2+)</name>
        <dbReference type="ChEBI" id="CHEBI:18420"/>
        <label>1</label>
        <note>catalytic; for actin cross-linking activity</note>
    </ligand>
</feature>
<feature type="binding site" evidence="1">
    <location>
        <position position="995"/>
    </location>
    <ligand>
        <name>ATP</name>
        <dbReference type="ChEBI" id="CHEBI:30616"/>
    </ligand>
</feature>
<feature type="binding site" evidence="1">
    <location>
        <position position="1066"/>
    </location>
    <ligand>
        <name>Mg(2+)</name>
        <dbReference type="ChEBI" id="CHEBI:18420"/>
        <label>1</label>
        <note>catalytic; for actin cross-linking activity</note>
    </ligand>
</feature>
<feature type="strand" evidence="11">
    <location>
        <begin position="734"/>
        <end position="737"/>
    </location>
</feature>
<feature type="strand" evidence="11">
    <location>
        <begin position="739"/>
        <end position="753"/>
    </location>
</feature>
<feature type="strand" evidence="11">
    <location>
        <begin position="759"/>
        <end position="766"/>
    </location>
</feature>
<feature type="strand" evidence="11">
    <location>
        <begin position="771"/>
        <end position="783"/>
    </location>
</feature>
<feature type="helix" evidence="11">
    <location>
        <begin position="788"/>
        <end position="790"/>
    </location>
</feature>
<feature type="strand" evidence="11">
    <location>
        <begin position="800"/>
        <end position="808"/>
    </location>
</feature>
<feature type="helix" evidence="11">
    <location>
        <begin position="816"/>
        <end position="839"/>
    </location>
</feature>
<feature type="strand" evidence="11">
    <location>
        <begin position="853"/>
        <end position="860"/>
    </location>
</feature>
<feature type="strand" evidence="11">
    <location>
        <begin position="865"/>
        <end position="868"/>
    </location>
</feature>
<feature type="strand" evidence="11">
    <location>
        <begin position="873"/>
        <end position="875"/>
    </location>
</feature>
<feature type="strand" evidence="11">
    <location>
        <begin position="882"/>
        <end position="895"/>
    </location>
</feature>
<feature type="helix" evidence="11">
    <location>
        <begin position="896"/>
        <end position="898"/>
    </location>
</feature>
<feature type="turn" evidence="11">
    <location>
        <begin position="899"/>
        <end position="901"/>
    </location>
</feature>
<feature type="helix" evidence="11">
    <location>
        <begin position="905"/>
        <end position="911"/>
    </location>
</feature>
<feature type="helix" evidence="11">
    <location>
        <begin position="920"/>
        <end position="927"/>
    </location>
</feature>
<feature type="strand" evidence="11">
    <location>
        <begin position="929"/>
        <end position="931"/>
    </location>
</feature>
<feature type="helix" evidence="11">
    <location>
        <begin position="936"/>
        <end position="960"/>
    </location>
</feature>
<feature type="helix" evidence="11">
    <location>
        <begin position="969"/>
        <end position="972"/>
    </location>
</feature>
<feature type="strand" evidence="11">
    <location>
        <begin position="978"/>
        <end position="980"/>
    </location>
</feature>
<feature type="helix" evidence="11">
    <location>
        <begin position="984"/>
        <end position="990"/>
    </location>
</feature>
<feature type="strand" evidence="11">
    <location>
        <begin position="991"/>
        <end position="994"/>
    </location>
</feature>
<feature type="helix" evidence="11">
    <location>
        <begin position="998"/>
        <end position="1004"/>
    </location>
</feature>
<feature type="helix" evidence="11">
    <location>
        <begin position="1007"/>
        <end position="1015"/>
    </location>
</feature>
<feature type="helix" evidence="11">
    <location>
        <begin position="1017"/>
        <end position="1022"/>
    </location>
</feature>
<feature type="helix" evidence="11">
    <location>
        <begin position="1027"/>
        <end position="1038"/>
    </location>
</feature>
<feature type="strand" evidence="11">
    <location>
        <begin position="1043"/>
        <end position="1046"/>
    </location>
</feature>
<feature type="strand" evidence="11">
    <location>
        <begin position="1052"/>
        <end position="1054"/>
    </location>
</feature>
<feature type="strand" evidence="11">
    <location>
        <begin position="1056"/>
        <end position="1069"/>
    </location>
</feature>
<feature type="helix" evidence="11">
    <location>
        <begin position="1072"/>
        <end position="1077"/>
    </location>
</feature>
<name>VGRG1_VIBCH</name>
<organism>
    <name type="scientific">Vibrio cholerae serotype O1 (strain ATCC 39315 / El Tor Inaba N16961)</name>
    <dbReference type="NCBI Taxonomy" id="243277"/>
    <lineage>
        <taxon>Bacteria</taxon>
        <taxon>Pseudomonadati</taxon>
        <taxon>Pseudomonadota</taxon>
        <taxon>Gammaproteobacteria</taxon>
        <taxon>Vibrionales</taxon>
        <taxon>Vibrionaceae</taxon>
        <taxon>Vibrio</taxon>
    </lineage>
</organism>
<dbReference type="EC" id="6.3.2.-" evidence="1"/>
<dbReference type="EMBL" id="AE003852">
    <property type="protein sequence ID" value="AAF94573.1"/>
    <property type="molecule type" value="Genomic_DNA"/>
</dbReference>
<dbReference type="PIR" id="D82202">
    <property type="entry name" value="D82202"/>
</dbReference>
<dbReference type="RefSeq" id="NP_231059.1">
    <property type="nucleotide sequence ID" value="NC_002505.1"/>
</dbReference>
<dbReference type="PDB" id="4GQK">
    <property type="method" value="X-ray"/>
    <property type="resolution" value="2.36 A"/>
    <property type="chains" value="A=717-1111"/>
</dbReference>
<dbReference type="PDBsum" id="4GQK"/>
<dbReference type="SMR" id="Q9KS45"/>
<dbReference type="STRING" id="243277.VC_1416"/>
<dbReference type="DNASU" id="2614048"/>
<dbReference type="EnsemblBacteria" id="AAF94573">
    <property type="protein sequence ID" value="AAF94573"/>
    <property type="gene ID" value="VC_1416"/>
</dbReference>
<dbReference type="KEGG" id="vch:VC_1416"/>
<dbReference type="PATRIC" id="fig|243277.26.peg.1345"/>
<dbReference type="eggNOG" id="COG3501">
    <property type="taxonomic scope" value="Bacteria"/>
</dbReference>
<dbReference type="HOGENOM" id="CLU_008414_0_0_6"/>
<dbReference type="EvolutionaryTrace" id="Q9KS45"/>
<dbReference type="Proteomes" id="UP000000584">
    <property type="component" value="Chromosome 1"/>
</dbReference>
<dbReference type="GO" id="GO:0005576">
    <property type="term" value="C:extracellular region"/>
    <property type="evidence" value="ECO:0007669"/>
    <property type="project" value="UniProtKB-SubCell"/>
</dbReference>
<dbReference type="GO" id="GO:0030430">
    <property type="term" value="C:host cell cytoplasm"/>
    <property type="evidence" value="ECO:0000314"/>
    <property type="project" value="UniProtKB"/>
</dbReference>
<dbReference type="GO" id="GO:0044164">
    <property type="term" value="C:host cell cytosol"/>
    <property type="evidence" value="ECO:0007669"/>
    <property type="project" value="UniProtKB-SubCell"/>
</dbReference>
<dbReference type="GO" id="GO:0016881">
    <property type="term" value="F:acid-amino acid ligase activity"/>
    <property type="evidence" value="ECO:0000250"/>
    <property type="project" value="UniProtKB"/>
</dbReference>
<dbReference type="GO" id="GO:0005524">
    <property type="term" value="F:ATP binding"/>
    <property type="evidence" value="ECO:0000250"/>
    <property type="project" value="UniProtKB"/>
</dbReference>
<dbReference type="GO" id="GO:0000287">
    <property type="term" value="F:magnesium ion binding"/>
    <property type="evidence" value="ECO:0000250"/>
    <property type="project" value="UniProtKB"/>
</dbReference>
<dbReference type="GO" id="GO:0090729">
    <property type="term" value="F:toxin activity"/>
    <property type="evidence" value="ECO:0007669"/>
    <property type="project" value="UniProtKB-KW"/>
</dbReference>
<dbReference type="GO" id="GO:0030042">
    <property type="term" value="P:actin filament depolymerization"/>
    <property type="evidence" value="ECO:0000314"/>
    <property type="project" value="UniProtKB"/>
</dbReference>
<dbReference type="GO" id="GO:0018262">
    <property type="term" value="P:isopeptide cross-linking"/>
    <property type="evidence" value="ECO:0000314"/>
    <property type="project" value="UniProtKB"/>
</dbReference>
<dbReference type="GO" id="GO:0018153">
    <property type="term" value="P:isopeptide cross-linking via N6-(L-isoglutamyl)-L-lysine"/>
    <property type="evidence" value="ECO:0000250"/>
    <property type="project" value="UniProtKB"/>
</dbReference>
<dbReference type="FunFam" id="1.10.3680.20:FF:000001">
    <property type="entry name" value="Actin cross-linking toxin VgrG1"/>
    <property type="match status" value="1"/>
</dbReference>
<dbReference type="FunFam" id="3.55.50.10:FF:000001">
    <property type="entry name" value="Actin cross-linking toxin VgrG1"/>
    <property type="match status" value="1"/>
</dbReference>
<dbReference type="Gene3D" id="2.30.110.50">
    <property type="match status" value="1"/>
</dbReference>
<dbReference type="Gene3D" id="4.10.220.110">
    <property type="match status" value="1"/>
</dbReference>
<dbReference type="Gene3D" id="1.10.3680.20">
    <property type="entry name" value="Actin cross-linking domain"/>
    <property type="match status" value="1"/>
</dbReference>
<dbReference type="Gene3D" id="3.55.50.10">
    <property type="entry name" value="Baseplate protein-like domains"/>
    <property type="match status" value="1"/>
</dbReference>
<dbReference type="Gene3D" id="2.40.50.230">
    <property type="entry name" value="Gp5 N-terminal domain"/>
    <property type="match status" value="1"/>
</dbReference>
<dbReference type="InterPro" id="IPR032074">
    <property type="entry name" value="ACD_dom"/>
</dbReference>
<dbReference type="InterPro" id="IPR006531">
    <property type="entry name" value="Gp5/Vgr_OB"/>
</dbReference>
<dbReference type="InterPro" id="IPR054030">
    <property type="entry name" value="Gp5_Vgr_C"/>
</dbReference>
<dbReference type="InterPro" id="IPR017847">
    <property type="entry name" value="T6SS_RhsGE_Vgr_subset"/>
</dbReference>
<dbReference type="InterPro" id="IPR006533">
    <property type="entry name" value="T6SS_Vgr_RhsGE"/>
</dbReference>
<dbReference type="InterPro" id="IPR050708">
    <property type="entry name" value="T6SS_VgrG/RHS"/>
</dbReference>
<dbReference type="InterPro" id="IPR037026">
    <property type="entry name" value="Vgr_OB-fold_dom_sf"/>
</dbReference>
<dbReference type="NCBIfam" id="TIGR01646">
    <property type="entry name" value="vgr_GE"/>
    <property type="match status" value="1"/>
</dbReference>
<dbReference type="NCBIfam" id="TIGR03361">
    <property type="entry name" value="VI_Rhs_Vgr"/>
    <property type="match status" value="1"/>
</dbReference>
<dbReference type="PANTHER" id="PTHR32305">
    <property type="match status" value="1"/>
</dbReference>
<dbReference type="PANTHER" id="PTHR32305:SF11">
    <property type="entry name" value="TYPE VI SECRETION SYSTEM SPIKE PROTEIN VGRG3"/>
    <property type="match status" value="1"/>
</dbReference>
<dbReference type="Pfam" id="PF16671">
    <property type="entry name" value="ACD"/>
    <property type="match status" value="1"/>
</dbReference>
<dbReference type="Pfam" id="PF22178">
    <property type="entry name" value="Gp5_trimer_C"/>
    <property type="match status" value="1"/>
</dbReference>
<dbReference type="Pfam" id="PF04717">
    <property type="entry name" value="Phage_base_V"/>
    <property type="match status" value="1"/>
</dbReference>
<dbReference type="Pfam" id="PF05954">
    <property type="entry name" value="Phage_GPD"/>
    <property type="match status" value="1"/>
</dbReference>
<dbReference type="SUPFAM" id="SSF69255">
    <property type="entry name" value="gp5 N-terminal domain-like"/>
    <property type="match status" value="1"/>
</dbReference>
<dbReference type="SUPFAM" id="SSF69349">
    <property type="entry name" value="Phage fibre proteins"/>
    <property type="match status" value="1"/>
</dbReference>
<dbReference type="SUPFAM" id="SSF69279">
    <property type="entry name" value="Phage tail proteins"/>
    <property type="match status" value="2"/>
</dbReference>
<dbReference type="PROSITE" id="PS51772">
    <property type="entry name" value="ACD"/>
    <property type="match status" value="1"/>
</dbReference>
<keyword id="KW-0002">3D-structure</keyword>
<keyword id="KW-0067">ATP-binding</keyword>
<keyword id="KW-1035">Host cytoplasm</keyword>
<keyword id="KW-0436">Ligase</keyword>
<keyword id="KW-0460">Magnesium</keyword>
<keyword id="KW-0479">Metal-binding</keyword>
<keyword id="KW-0547">Nucleotide-binding</keyword>
<keyword id="KW-1185">Reference proteome</keyword>
<keyword id="KW-0964">Secreted</keyword>
<keyword id="KW-0800">Toxin</keyword>
<keyword id="KW-0843">Virulence</keyword>
<gene>
    <name evidence="7" type="primary">vgrG1</name>
    <name evidence="7" type="synonym">vgrG-1</name>
    <name evidence="9" type="ordered locus">VC_1416</name>
</gene>